<dbReference type="EC" id="7.1.1.7" evidence="2"/>
<dbReference type="EMBL" id="AE014075">
    <property type="protein sequence ID" value="AAN79284.1"/>
    <property type="status" value="ALT_INIT"/>
    <property type="molecule type" value="Genomic_DNA"/>
</dbReference>
<dbReference type="RefSeq" id="WP_000884361.1">
    <property type="nucleotide sequence ID" value="NZ_CP051263.1"/>
</dbReference>
<dbReference type="SMR" id="P0ABK0"/>
<dbReference type="STRING" id="199310.c0811"/>
<dbReference type="GeneID" id="93776752"/>
<dbReference type="KEGG" id="ecc:c0811"/>
<dbReference type="eggNOG" id="COG1271">
    <property type="taxonomic scope" value="Bacteria"/>
</dbReference>
<dbReference type="HOGENOM" id="CLU_030555_0_1_6"/>
<dbReference type="UniPathway" id="UPA00705"/>
<dbReference type="Proteomes" id="UP000001410">
    <property type="component" value="Chromosome"/>
</dbReference>
<dbReference type="GO" id="GO:0070069">
    <property type="term" value="C:cytochrome complex"/>
    <property type="evidence" value="ECO:0007669"/>
    <property type="project" value="InterPro"/>
</dbReference>
<dbReference type="GO" id="GO:0005886">
    <property type="term" value="C:plasma membrane"/>
    <property type="evidence" value="ECO:0007669"/>
    <property type="project" value="UniProtKB-SubCell"/>
</dbReference>
<dbReference type="GO" id="GO:0009055">
    <property type="term" value="F:electron transfer activity"/>
    <property type="evidence" value="ECO:0007669"/>
    <property type="project" value="InterPro"/>
</dbReference>
<dbReference type="GO" id="GO:0020037">
    <property type="term" value="F:heme binding"/>
    <property type="evidence" value="ECO:0007669"/>
    <property type="project" value="TreeGrafter"/>
</dbReference>
<dbReference type="GO" id="GO:0046872">
    <property type="term" value="F:metal ion binding"/>
    <property type="evidence" value="ECO:0007669"/>
    <property type="project" value="UniProtKB-KW"/>
</dbReference>
<dbReference type="GO" id="GO:0016682">
    <property type="term" value="F:oxidoreductase activity, acting on diphenols and related substances as donors, oxygen as acceptor"/>
    <property type="evidence" value="ECO:0007669"/>
    <property type="project" value="TreeGrafter"/>
</dbReference>
<dbReference type="GO" id="GO:0019646">
    <property type="term" value="P:aerobic electron transport chain"/>
    <property type="evidence" value="ECO:0007669"/>
    <property type="project" value="InterPro"/>
</dbReference>
<dbReference type="InterPro" id="IPR002585">
    <property type="entry name" value="Cyt-d_ubiquinol_oxidase_su_1"/>
</dbReference>
<dbReference type="NCBIfam" id="NF011677">
    <property type="entry name" value="PRK15097.1"/>
    <property type="match status" value="1"/>
</dbReference>
<dbReference type="PANTHER" id="PTHR30365:SF0">
    <property type="entry name" value="CYTOCHROME BD-I UBIQUINOL OXIDASE SUBUNIT 1"/>
    <property type="match status" value="1"/>
</dbReference>
<dbReference type="PANTHER" id="PTHR30365">
    <property type="entry name" value="CYTOCHROME D UBIQUINOL OXIDASE"/>
    <property type="match status" value="1"/>
</dbReference>
<dbReference type="Pfam" id="PF01654">
    <property type="entry name" value="Cyt_bd_oxida_I"/>
    <property type="match status" value="1"/>
</dbReference>
<dbReference type="PIRSF" id="PIRSF006446">
    <property type="entry name" value="Cyt_quinol_oxidase_1"/>
    <property type="match status" value="1"/>
</dbReference>
<accession>P0ABK0</accession>
<accession>P11026</accession>
<accession>P75754</accession>
<accession>P76823</accession>
<name>CYDA_ECOL6</name>
<reference key="1">
    <citation type="journal article" date="2002" name="Proc. Natl. Acad. Sci. U.S.A.">
        <title>Extensive mosaic structure revealed by the complete genome sequence of uropathogenic Escherichia coli.</title>
        <authorList>
            <person name="Welch R.A."/>
            <person name="Burland V."/>
            <person name="Plunkett G. III"/>
            <person name="Redford P."/>
            <person name="Roesch P."/>
            <person name="Rasko D."/>
            <person name="Buckles E.L."/>
            <person name="Liou S.-R."/>
            <person name="Boutin A."/>
            <person name="Hackett J."/>
            <person name="Stroud D."/>
            <person name="Mayhew G.F."/>
            <person name="Rose D.J."/>
            <person name="Zhou S."/>
            <person name="Schwartz D.C."/>
            <person name="Perna N.T."/>
            <person name="Mobley H.L.T."/>
            <person name="Donnenberg M.S."/>
            <person name="Blattner F.R."/>
        </authorList>
    </citation>
    <scope>NUCLEOTIDE SEQUENCE [LARGE SCALE GENOMIC DNA]</scope>
    <source>
        <strain>CFT073 / ATCC 700928 / UPEC</strain>
    </source>
</reference>
<sequence>MLDIVELSRLQFALTAMYHFLFVPLTLGMAFLLAIMETVYVLSGKQIYKDMTKFWGKLFGINFALGVATGLTMEFQFGTNWSYYSHYVGDIFGAPLAIEGLMAFFLESTFVGLFFFGWDRLGKVQHMCVTWLVALGSNLSALWILVANGWMQNPIASDFNFETMRMEMVSFSELVLNPVAQVKFVHTVASGYVTGAMFILGISAWYMLKGRDFAFAKRSFAIAASFGMAAVLSVIVLGDESGYEMGDVQKTKLAAIEAEWETQPAPAAFTLFGIPDQEEETNKFAIQIPYALGIIATRSVDTPVIGLKELMVQHEERIRNGMKAYSLLEQLRSGSTDQAVRDQFNSMKKDLGYGLLLKRYTPNVADATEAQIQQATKDSIPRVAPLYFAFRIMVACGFLLLAIIALSFWSVIRNRIGEKKWLLRAALYGIPLPWIAVEAGWFVAEYGRQPWAIGEVLPTAVANSSLTAGDLIFSMVLICGLYTLFLVAELFLMFKFARLGPSSLKTGRYHFEQSSTTTQPAR</sequence>
<keyword id="KW-0997">Cell inner membrane</keyword>
<keyword id="KW-1003">Cell membrane</keyword>
<keyword id="KW-0249">Electron transport</keyword>
<keyword id="KW-0291">Formylation</keyword>
<keyword id="KW-0349">Heme</keyword>
<keyword id="KW-0408">Iron</keyword>
<keyword id="KW-0472">Membrane</keyword>
<keyword id="KW-0479">Metal-binding</keyword>
<keyword id="KW-1185">Reference proteome</keyword>
<keyword id="KW-1278">Translocase</keyword>
<keyword id="KW-0812">Transmembrane</keyword>
<keyword id="KW-1133">Transmembrane helix</keyword>
<keyword id="KW-0813">Transport</keyword>
<comment type="function">
    <text evidence="2">A terminal oxidase that produces a proton motive force by the vectorial transfer of protons across the inner membrane. It is the component of the aerobic respiratory chain of E.coli that predominates when cells are grown at low aeration. Generates a proton motive force using protons and electrons from opposite sides of the membrane to generate H(2)O, transferring 1 proton/electron.</text>
</comment>
<comment type="catalytic activity">
    <reaction evidence="2">
        <text>2 a ubiquinol + O2(in) + 4 H(+)(in) = 2 a ubiquinone + 2 H2O(in) + 4 H(+)(out)</text>
        <dbReference type="Rhea" id="RHEA:40527"/>
        <dbReference type="Rhea" id="RHEA-COMP:9565"/>
        <dbReference type="Rhea" id="RHEA-COMP:9566"/>
        <dbReference type="ChEBI" id="CHEBI:15377"/>
        <dbReference type="ChEBI" id="CHEBI:15378"/>
        <dbReference type="ChEBI" id="CHEBI:15379"/>
        <dbReference type="ChEBI" id="CHEBI:16389"/>
        <dbReference type="ChEBI" id="CHEBI:17976"/>
        <dbReference type="EC" id="7.1.1.7"/>
    </reaction>
</comment>
<comment type="cofactor">
    <cofactor evidence="2">
        <name>heme b</name>
        <dbReference type="ChEBI" id="CHEBI:60344"/>
    </cofactor>
    <text evidence="2">Binds 1 protoheme IX center (heme b558) per subunit.</text>
</comment>
<comment type="cofactor">
    <cofactor evidence="2">
        <name>heme b</name>
        <dbReference type="ChEBI" id="CHEBI:60344"/>
    </cofactor>
    <text evidence="2">Binds 1 protoheme IX center (heme b595) per heterodimer, in conjunction with CydB.</text>
</comment>
<comment type="cofactor">
    <cofactor evidence="2">
        <name>heme d cis-diol</name>
        <dbReference type="ChEBI" id="CHEBI:62814"/>
    </cofactor>
    <text evidence="2">Binds 1 iron-chlorin (heme d or cytochrome d) per heterodimer, in conjunction with CydB.</text>
</comment>
<comment type="pathway">
    <text>Energy metabolism; oxidative phosphorylation.</text>
</comment>
<comment type="subunit">
    <text evidence="2">Heterodimer of subunits I and II.</text>
</comment>
<comment type="subcellular location">
    <subcellularLocation>
        <location evidence="2">Cell inner membrane</location>
        <topology evidence="2">Multi-pass membrane protein</topology>
    </subcellularLocation>
</comment>
<comment type="similarity">
    <text evidence="4">Belongs to the cytochrome ubiquinol oxidase subunit 1 family.</text>
</comment>
<comment type="sequence caution" evidence="4">
    <conflict type="erroneous initiation">
        <sequence resource="EMBL-CDS" id="AAN79284"/>
    </conflict>
    <text>Extended N-terminus.</text>
</comment>
<gene>
    <name type="primary">cydA</name>
    <name type="ordered locus">c0811</name>
</gene>
<feature type="chain" id="PRO_0000183920" description="Cytochrome bd-I ubiquinol oxidase subunit 1">
    <location>
        <begin position="1"/>
        <end position="522"/>
    </location>
</feature>
<feature type="topological domain" description="Cytoplasmic" evidence="4">
    <location>
        <begin position="1"/>
        <end position="22"/>
    </location>
</feature>
<feature type="transmembrane region" description="Helical" evidence="4">
    <location>
        <begin position="23"/>
        <end position="42"/>
    </location>
</feature>
<feature type="topological domain" description="Periplasmic" evidence="4">
    <location>
        <begin position="43"/>
        <end position="94"/>
    </location>
</feature>
<feature type="transmembrane region" description="Helical" evidence="4">
    <location>
        <begin position="95"/>
        <end position="114"/>
    </location>
</feature>
<feature type="topological domain" description="Cytoplasmic" evidence="4">
    <location>
        <begin position="115"/>
        <end position="129"/>
    </location>
</feature>
<feature type="transmembrane region" description="Helical" evidence="4">
    <location>
        <begin position="130"/>
        <end position="149"/>
    </location>
</feature>
<feature type="topological domain" description="Periplasmic" evidence="4">
    <location>
        <begin position="150"/>
        <end position="187"/>
    </location>
</feature>
<feature type="transmembrane region" description="Helical" evidence="4">
    <location>
        <begin position="188"/>
        <end position="207"/>
    </location>
</feature>
<feature type="topological domain" description="Cytoplasmic" evidence="4">
    <location>
        <begin position="208"/>
        <end position="219"/>
    </location>
</feature>
<feature type="transmembrane region" description="Helical" evidence="4">
    <location>
        <begin position="220"/>
        <end position="239"/>
    </location>
</feature>
<feature type="topological domain" description="Periplasmic" evidence="4">
    <location>
        <begin position="240"/>
        <end position="392"/>
    </location>
</feature>
<feature type="transmembrane region" description="Helical" evidence="4">
    <location>
        <begin position="393"/>
        <end position="412"/>
    </location>
</feature>
<feature type="topological domain" description="Cytoplasmic" evidence="4">
    <location>
        <begin position="413"/>
        <end position="470"/>
    </location>
</feature>
<feature type="transmembrane region" description="Helical" evidence="4">
    <location>
        <begin position="471"/>
        <end position="490"/>
    </location>
</feature>
<feature type="topological domain" description="Periplasmic" evidence="4">
    <location>
        <begin position="491"/>
        <end position="522"/>
    </location>
</feature>
<feature type="binding site" description="axial binding residue" evidence="3">
    <location>
        <position position="19"/>
    </location>
    <ligand>
        <name>heme b</name>
        <dbReference type="ChEBI" id="CHEBI:60344"/>
        <label>b595</label>
    </ligand>
    <ligandPart>
        <name>Fe</name>
        <dbReference type="ChEBI" id="CHEBI:18248"/>
    </ligandPart>
</feature>
<feature type="binding site" description="axial binding residue" evidence="1">
    <location>
        <position position="186"/>
    </location>
    <ligand>
        <name>heme b</name>
        <dbReference type="ChEBI" id="CHEBI:60344"/>
        <label>b558</label>
    </ligand>
    <ligandPart>
        <name>Fe</name>
        <dbReference type="ChEBI" id="CHEBI:18248"/>
    </ligandPart>
</feature>
<feature type="binding site" description="axial binding residue" evidence="1">
    <location>
        <position position="393"/>
    </location>
    <ligand>
        <name>heme b</name>
        <dbReference type="ChEBI" id="CHEBI:60344"/>
        <label>b558</label>
    </ligand>
    <ligandPart>
        <name>Fe</name>
        <dbReference type="ChEBI" id="CHEBI:18248"/>
    </ligandPart>
</feature>
<feature type="modified residue" description="N-formylmethionine" evidence="1">
    <location>
        <position position="1"/>
    </location>
</feature>
<organism>
    <name type="scientific">Escherichia coli O6:H1 (strain CFT073 / ATCC 700928 / UPEC)</name>
    <dbReference type="NCBI Taxonomy" id="199310"/>
    <lineage>
        <taxon>Bacteria</taxon>
        <taxon>Pseudomonadati</taxon>
        <taxon>Pseudomonadota</taxon>
        <taxon>Gammaproteobacteria</taxon>
        <taxon>Enterobacterales</taxon>
        <taxon>Enterobacteriaceae</taxon>
        <taxon>Escherichia</taxon>
    </lineage>
</organism>
<proteinExistence type="inferred from homology"/>
<evidence type="ECO:0000250" key="1"/>
<evidence type="ECO:0000250" key="2">
    <source>
        <dbReference type="UniProtKB" id="P0ABJ9"/>
    </source>
</evidence>
<evidence type="ECO:0000255" key="3"/>
<evidence type="ECO:0000305" key="4"/>
<protein>
    <recommendedName>
        <fullName>Cytochrome bd-I ubiquinol oxidase subunit 1</fullName>
        <ecNumber evidence="2">7.1.1.7</ecNumber>
    </recommendedName>
    <alternativeName>
        <fullName>Cytochrome bd-I oxidase subunit I</fullName>
    </alternativeName>
    <alternativeName>
        <fullName>Cytochrome d ubiquinol oxidase subunit I</fullName>
    </alternativeName>
</protein>